<proteinExistence type="inferred from homology"/>
<sequence length="126" mass="14308">MRHRKSGRQLNRNSSHRKAMFSNMASSLVRHEIIKTTLPKAKELRRVVEPLITLAKTDSVANRRLAFARTRDNEVVAKLFTELGPRFAQRAGGYTRILKCGFRAGDKAPMAYIELVDRPEVEADAE</sequence>
<organism>
    <name type="scientific">Aliivibrio fischeri (strain MJ11)</name>
    <name type="common">Vibrio fischeri</name>
    <dbReference type="NCBI Taxonomy" id="388396"/>
    <lineage>
        <taxon>Bacteria</taxon>
        <taxon>Pseudomonadati</taxon>
        <taxon>Pseudomonadota</taxon>
        <taxon>Gammaproteobacteria</taxon>
        <taxon>Vibrionales</taxon>
        <taxon>Vibrionaceae</taxon>
        <taxon>Aliivibrio</taxon>
    </lineage>
</organism>
<evidence type="ECO:0000255" key="1">
    <source>
        <dbReference type="HAMAP-Rule" id="MF_01368"/>
    </source>
</evidence>
<evidence type="ECO:0000305" key="2"/>
<accession>B5FGE2</accession>
<protein>
    <recommendedName>
        <fullName evidence="1">Large ribosomal subunit protein bL17</fullName>
    </recommendedName>
    <alternativeName>
        <fullName evidence="2">50S ribosomal protein L17</fullName>
    </alternativeName>
</protein>
<keyword id="KW-0687">Ribonucleoprotein</keyword>
<keyword id="KW-0689">Ribosomal protein</keyword>
<reference key="1">
    <citation type="submission" date="2008-08" db="EMBL/GenBank/DDBJ databases">
        <title>Complete sequence of Vibrio fischeri strain MJ11.</title>
        <authorList>
            <person name="Mandel M.J."/>
            <person name="Stabb E.V."/>
            <person name="Ruby E.G."/>
            <person name="Ferriera S."/>
            <person name="Johnson J."/>
            <person name="Kravitz S."/>
            <person name="Beeson K."/>
            <person name="Sutton G."/>
            <person name="Rogers Y.-H."/>
            <person name="Friedman R."/>
            <person name="Frazier M."/>
            <person name="Venter J.C."/>
        </authorList>
    </citation>
    <scope>NUCLEOTIDE SEQUENCE [LARGE SCALE GENOMIC DNA]</scope>
    <source>
        <strain>MJ11</strain>
    </source>
</reference>
<feature type="chain" id="PRO_1000144504" description="Large ribosomal subunit protein bL17">
    <location>
        <begin position="1"/>
        <end position="126"/>
    </location>
</feature>
<gene>
    <name evidence="1" type="primary">rplQ</name>
    <name type="ordered locus">VFMJ11_0251</name>
</gene>
<name>RL17_ALIFM</name>
<comment type="subunit">
    <text evidence="1">Part of the 50S ribosomal subunit. Contacts protein L32.</text>
</comment>
<comment type="similarity">
    <text evidence="1">Belongs to the bacterial ribosomal protein bL17 family.</text>
</comment>
<dbReference type="EMBL" id="CP001139">
    <property type="protein sequence ID" value="ACH65153.1"/>
    <property type="molecule type" value="Genomic_DNA"/>
</dbReference>
<dbReference type="RefSeq" id="WP_005417273.1">
    <property type="nucleotide sequence ID" value="NC_011184.1"/>
</dbReference>
<dbReference type="SMR" id="B5FGE2"/>
<dbReference type="GeneID" id="54162884"/>
<dbReference type="KEGG" id="vfm:VFMJ11_0251"/>
<dbReference type="HOGENOM" id="CLU_074407_2_0_6"/>
<dbReference type="Proteomes" id="UP000001857">
    <property type="component" value="Chromosome I"/>
</dbReference>
<dbReference type="GO" id="GO:0022625">
    <property type="term" value="C:cytosolic large ribosomal subunit"/>
    <property type="evidence" value="ECO:0007669"/>
    <property type="project" value="TreeGrafter"/>
</dbReference>
<dbReference type="GO" id="GO:0003735">
    <property type="term" value="F:structural constituent of ribosome"/>
    <property type="evidence" value="ECO:0007669"/>
    <property type="project" value="InterPro"/>
</dbReference>
<dbReference type="GO" id="GO:0006412">
    <property type="term" value="P:translation"/>
    <property type="evidence" value="ECO:0007669"/>
    <property type="project" value="UniProtKB-UniRule"/>
</dbReference>
<dbReference type="FunFam" id="3.90.1030.10:FF:000001">
    <property type="entry name" value="50S ribosomal protein L17"/>
    <property type="match status" value="1"/>
</dbReference>
<dbReference type="Gene3D" id="3.90.1030.10">
    <property type="entry name" value="Ribosomal protein L17"/>
    <property type="match status" value="1"/>
</dbReference>
<dbReference type="HAMAP" id="MF_01368">
    <property type="entry name" value="Ribosomal_bL17"/>
    <property type="match status" value="1"/>
</dbReference>
<dbReference type="InterPro" id="IPR000456">
    <property type="entry name" value="Ribosomal_bL17"/>
</dbReference>
<dbReference type="InterPro" id="IPR047859">
    <property type="entry name" value="Ribosomal_bL17_CS"/>
</dbReference>
<dbReference type="InterPro" id="IPR036373">
    <property type="entry name" value="Ribosomal_bL17_sf"/>
</dbReference>
<dbReference type="NCBIfam" id="TIGR00059">
    <property type="entry name" value="L17"/>
    <property type="match status" value="1"/>
</dbReference>
<dbReference type="PANTHER" id="PTHR14413:SF16">
    <property type="entry name" value="LARGE RIBOSOMAL SUBUNIT PROTEIN BL17M"/>
    <property type="match status" value="1"/>
</dbReference>
<dbReference type="PANTHER" id="PTHR14413">
    <property type="entry name" value="RIBOSOMAL PROTEIN L17"/>
    <property type="match status" value="1"/>
</dbReference>
<dbReference type="Pfam" id="PF01196">
    <property type="entry name" value="Ribosomal_L17"/>
    <property type="match status" value="1"/>
</dbReference>
<dbReference type="SUPFAM" id="SSF64263">
    <property type="entry name" value="Prokaryotic ribosomal protein L17"/>
    <property type="match status" value="1"/>
</dbReference>
<dbReference type="PROSITE" id="PS01167">
    <property type="entry name" value="RIBOSOMAL_L17"/>
    <property type="match status" value="1"/>
</dbReference>